<keyword id="KW-0067">ATP-binding</keyword>
<keyword id="KW-1015">Disulfide bond</keyword>
<keyword id="KW-0325">Glycoprotein</keyword>
<keyword id="KW-0418">Kinase</keyword>
<keyword id="KW-0472">Membrane</keyword>
<keyword id="KW-0547">Nucleotide-binding</keyword>
<keyword id="KW-0597">Phosphoprotein</keyword>
<keyword id="KW-0675">Receptor</keyword>
<keyword id="KW-1185">Reference proteome</keyword>
<keyword id="KW-0732">Signal</keyword>
<keyword id="KW-0808">Transferase</keyword>
<keyword id="KW-0812">Transmembrane</keyword>
<keyword id="KW-1133">Transmembrane helix</keyword>
<keyword id="KW-0829">Tyrosine-protein kinase</keyword>
<gene>
    <name type="primary">Erbb3</name>
</gene>
<feature type="signal peptide" evidence="3">
    <location>
        <begin position="1"/>
        <end position="19"/>
    </location>
</feature>
<feature type="chain" id="PRO_0000016673" description="Receptor tyrosine-protein kinase erbB-3">
    <location>
        <begin position="20"/>
        <end position="1339"/>
    </location>
</feature>
<feature type="topological domain" description="Extracellular" evidence="3">
    <location>
        <begin position="20"/>
        <end position="643"/>
    </location>
</feature>
<feature type="transmembrane region" description="Helical" evidence="3">
    <location>
        <begin position="644"/>
        <end position="662"/>
    </location>
</feature>
<feature type="topological domain" description="Cytoplasmic" evidence="3">
    <location>
        <begin position="663"/>
        <end position="1339"/>
    </location>
</feature>
<feature type="domain" description="Protein kinase" evidence="4">
    <location>
        <begin position="707"/>
        <end position="964"/>
    </location>
</feature>
<feature type="region of interest" description="Disordered" evidence="6">
    <location>
        <begin position="1023"/>
        <end position="1052"/>
    </location>
</feature>
<feature type="region of interest" description="Disordered" evidence="6">
    <location>
        <begin position="1078"/>
        <end position="1215"/>
    </location>
</feature>
<feature type="compositionally biased region" description="Low complexity" evidence="6">
    <location>
        <begin position="1023"/>
        <end position="1036"/>
    </location>
</feature>
<feature type="compositionally biased region" description="Polar residues" evidence="6">
    <location>
        <begin position="1039"/>
        <end position="1052"/>
    </location>
</feature>
<feature type="compositionally biased region" description="Low complexity" evidence="6">
    <location>
        <begin position="1172"/>
        <end position="1184"/>
    </location>
</feature>
<feature type="compositionally biased region" description="Acidic residues" evidence="6">
    <location>
        <begin position="1185"/>
        <end position="1195"/>
    </location>
</feature>
<feature type="active site" description="Proton acceptor" evidence="4 5">
    <location>
        <position position="832"/>
    </location>
</feature>
<feature type="binding site" evidence="4">
    <location>
        <begin position="713"/>
        <end position="721"/>
    </location>
    <ligand>
        <name>ATP</name>
        <dbReference type="ChEBI" id="CHEBI:30616"/>
    </ligand>
</feature>
<feature type="binding site" evidence="4">
    <location>
        <position position="740"/>
    </location>
    <ligand>
        <name>ATP</name>
        <dbReference type="ChEBI" id="CHEBI:30616"/>
    </ligand>
</feature>
<feature type="binding site" evidence="4">
    <location>
        <begin position="786"/>
        <end position="788"/>
    </location>
    <ligand>
        <name>ATP</name>
        <dbReference type="ChEBI" id="CHEBI:30616"/>
    </ligand>
</feature>
<feature type="binding site" evidence="4">
    <location>
        <begin position="832"/>
        <end position="837"/>
    </location>
    <ligand>
        <name>ATP</name>
        <dbReference type="ChEBI" id="CHEBI:30616"/>
    </ligand>
</feature>
<feature type="modified residue" description="Phosphoserine" evidence="8">
    <location>
        <position position="684"/>
    </location>
</feature>
<feature type="modified residue" description="Phosphoserine" evidence="1">
    <location>
        <position position="980"/>
    </location>
</feature>
<feature type="glycosylation site" description="N-linked (GlcNAc...) asparagine" evidence="3">
    <location>
        <position position="126"/>
    </location>
</feature>
<feature type="glycosylation site" description="N-linked (GlcNAc...) asparagine" evidence="3">
    <location>
        <position position="250"/>
    </location>
</feature>
<feature type="glycosylation site" description="N-linked (GlcNAc...) asparagine" evidence="3">
    <location>
        <position position="353"/>
    </location>
</feature>
<feature type="glycosylation site" description="N-linked (GlcNAc...) asparagine" evidence="3">
    <location>
        <position position="408"/>
    </location>
</feature>
<feature type="glycosylation site" description="N-linked (GlcNAc...) asparagine" evidence="3">
    <location>
        <position position="414"/>
    </location>
</feature>
<feature type="glycosylation site" description="N-linked (GlcNAc...) asparagine" evidence="3">
    <location>
        <position position="437"/>
    </location>
</feature>
<feature type="glycosylation site" description="N-linked (GlcNAc...) asparagine" evidence="3">
    <location>
        <position position="469"/>
    </location>
</feature>
<feature type="glycosylation site" description="N-linked (GlcNAc...) asparagine" evidence="3">
    <location>
        <position position="522"/>
    </location>
</feature>
<feature type="glycosylation site" description="N-linked (GlcNAc...) asparagine" evidence="3">
    <location>
        <position position="566"/>
    </location>
</feature>
<feature type="glycosylation site" description="N-linked (GlcNAc...) asparagine" evidence="3">
    <location>
        <position position="616"/>
    </location>
</feature>
<feature type="disulfide bond" evidence="1">
    <location>
        <begin position="186"/>
        <end position="194"/>
    </location>
</feature>
<feature type="disulfide bond" evidence="1">
    <location>
        <begin position="190"/>
        <end position="202"/>
    </location>
</feature>
<feature type="disulfide bond" evidence="1">
    <location>
        <begin position="210"/>
        <end position="218"/>
    </location>
</feature>
<feature type="disulfide bond" evidence="1">
    <location>
        <begin position="214"/>
        <end position="226"/>
    </location>
</feature>
<feature type="disulfide bond" evidence="1">
    <location>
        <begin position="227"/>
        <end position="235"/>
    </location>
</feature>
<feature type="disulfide bond" evidence="1">
    <location>
        <begin position="231"/>
        <end position="243"/>
    </location>
</feature>
<feature type="disulfide bond" evidence="1">
    <location>
        <begin position="246"/>
        <end position="255"/>
    </location>
</feature>
<feature type="disulfide bond" evidence="1">
    <location>
        <begin position="259"/>
        <end position="286"/>
    </location>
</feature>
<feature type="disulfide bond" evidence="1">
    <location>
        <begin position="290"/>
        <end position="301"/>
    </location>
</feature>
<feature type="disulfide bond" evidence="1">
    <location>
        <begin position="305"/>
        <end position="320"/>
    </location>
</feature>
<feature type="disulfide bond" evidence="1">
    <location>
        <begin position="323"/>
        <end position="327"/>
    </location>
</feature>
<feature type="disulfide bond" evidence="1">
    <location>
        <begin position="500"/>
        <end position="509"/>
    </location>
</feature>
<feature type="disulfide bond" evidence="1">
    <location>
        <begin position="504"/>
        <end position="517"/>
    </location>
</feature>
<feature type="disulfide bond" evidence="1">
    <location>
        <begin position="520"/>
        <end position="529"/>
    </location>
</feature>
<feature type="disulfide bond" evidence="1">
    <location>
        <begin position="533"/>
        <end position="549"/>
    </location>
</feature>
<feature type="disulfide bond" evidence="1">
    <location>
        <begin position="552"/>
        <end position="565"/>
    </location>
</feature>
<feature type="disulfide bond" evidence="1">
    <location>
        <begin position="556"/>
        <end position="573"/>
    </location>
</feature>
<feature type="disulfide bond" evidence="1">
    <location>
        <begin position="576"/>
        <end position="585"/>
    </location>
</feature>
<feature type="disulfide bond" evidence="1">
    <location>
        <begin position="589"/>
        <end position="610"/>
    </location>
</feature>
<feature type="disulfide bond" evidence="1">
    <location>
        <begin position="613"/>
        <end position="621"/>
    </location>
</feature>
<feature type="disulfide bond" evidence="1">
    <location>
        <begin position="617"/>
        <end position="629"/>
    </location>
</feature>
<feature type="sequence conflict" description="In Ref. 3; AAC53050." evidence="7" ref="3">
    <original>L</original>
    <variation>P</variation>
    <location>
        <position position="1028"/>
    </location>
</feature>
<reference key="1">
    <citation type="journal article" date="1995" name="Gene">
        <title>Cloning of the rat ErbB3 cDNA and characterization of the recombinant protein.</title>
        <authorList>
            <person name="Hellyer N.J."/>
            <person name="Kim H.-H."/>
            <person name="Greaves C.H."/>
            <person name="Sierke S.L."/>
            <person name="Koland J.G."/>
        </authorList>
    </citation>
    <scope>NUCLEOTIDE SEQUENCE [MRNA]</scope>
    <source>
        <strain>Sprague-Dawley</strain>
        <tissue>Liver</tissue>
    </source>
</reference>
<reference key="2">
    <citation type="submission" date="2001-12" db="EMBL/GenBank/DDBJ databases">
        <authorList>
            <person name="Hellyer N.J."/>
            <person name="Koland J.G."/>
        </authorList>
    </citation>
    <scope>SEQUENCE REVISION TO 85; 513 AND 565</scope>
</reference>
<reference key="3">
    <citation type="journal article" date="1997" name="J. Neurosci.">
        <title>Expression of neuregulins and their putative receptors, ErbB2 and ErbB3, is induced during Wallerian degeneration.</title>
        <authorList>
            <person name="Carroll S.L."/>
            <person name="Miller M.L."/>
            <person name="Frohnert P.W."/>
            <person name="Kim S.S."/>
            <person name="Corbett J.A."/>
        </authorList>
    </citation>
    <scope>NUCLEOTIDE SEQUENCE [MRNA] OF 922-1097</scope>
    <source>
        <strain>Sprague-Dawley</strain>
        <tissue>Sciatic nerve</tissue>
    </source>
</reference>
<reference key="4">
    <citation type="journal article" date="2012" name="Nat. Commun.">
        <title>Quantitative maps of protein phosphorylation sites across 14 different rat organs and tissues.</title>
        <authorList>
            <person name="Lundby A."/>
            <person name="Secher A."/>
            <person name="Lage K."/>
            <person name="Nordsborg N.B."/>
            <person name="Dmytriyev A."/>
            <person name="Lundby C."/>
            <person name="Olsen J.V."/>
        </authorList>
    </citation>
    <scope>PHOSPHORYLATION [LARGE SCALE ANALYSIS] AT SER-684</scope>
    <scope>IDENTIFICATION BY MASS SPECTROMETRY [LARGE SCALE ANALYSIS]</scope>
</reference>
<sequence length="1339" mass="147546">MRATGTLQVLCFLLSLARGSEMGNSQAVCPGTLNGLSVTGDADNQYQTLYKLYEKCEVVMGNLEIVLTGHNADLSFLQWIREVTGYVLVAMNEFSVLPLPNLRVVRGTQVYDGKFAIFVMLNYNTNSSHALRQLKFTQLTEILSGGVYIEKNDKLCHMDTIDWRDIVRVRGAEIVVKNNGANCPPCHEVCKGRCWGPGPDDCQILTKTICAPQCNGRCFGPNPNQCCHDECAGGCSGPQDTDCFACRRFNDSGACVPRCPEPLVYNKLTFQLEPNPHTKYQYGGVCVASCPHNFVVDQTFCVRACPPDKMEVDKHGLKMCEPCGGLCPKACEGTGSGSRYQTVDSSNIDGFVNCTKILGNLDFLITGLNVDPWHKIPALDPEKLNVFRTVREITGYLNIQSWPPHMHNFSVFSNLTTIGGRSLYNRGFSLLIMKNLNVTSLGFRSLKEISAGRVYISANQQLCYHHSLNWTRLLRGPSEERLDIKYDRPLGECLAEGKVCDPLCSSGGCWGPGPGQCLSCRNYSREGVCVTHCNFLQGEPREFVHEAQCFSCHPECLPMEGTSTCNGSGSDACARCAHFRDGPHCVNSCPHGILGAKGPIYKYPDAQNECRPCHENCTQGCNGPELQDCLGQAEVLMSKPHLVIAVTVGLAVILMILGGSFLYWRGRRIQNKRAMRRYLERGESIEPLDPSEKANKVLARIFKETELRKLKVLGSGVFGTVHKGIWIPEGESIKIPVCIKVIEDKSGRQSFQAVTDHMLAVGSLDHAHIVRLLGLCPGSSLQLVTQYLPLGSLLDHVKQHRETLGPQLLLNWGVQIAKGMYYLEEHSMVHRDLALRNVMLKSPSQVQVADFGVADLLPPDDKQLLHSEAKTPIKWMALESIHFGKYTHQSDVWSYGVTVWELMTFGAEPYAGLRLAEIPDLLEKGERLAQPQICTIDVYMVMVKCWMIDENIRPTFKELANEFTRMARDPPRYLVIKRASGPGTPPAAEPSVLTTKELQEAELEPELDLDLDLEAEEEGLATSLGSALSLPTGTLTRPRGSQSLLSPSSGYMPMNQSSLGEACLDSAVLGGREQFSRPISLHPIPRGRPASESSEGHVTGSEAELQEKVSVCRSRSRSRSPRPRGDSAYHSQRHSLLTPVTPLSPPGLEEEDGNGYVMPDTHLRGASSSREGTLSSVGLSSVLGTEEEDEDEEYEYMNRKRRGSPPRPPRPGSLEELGYEYMDVGSDLSASLGSTQSCPLHPMAIVPSAGTTPDEDYEYMNRRRGAGGAGGDYAAMGACPAAEQGYEEMRAFQGPGHHAPHVRYARLKTLRSLEATDSAFDNPDYWHSRLFPKANAQRT</sequence>
<comment type="function">
    <text evidence="1">Tyrosine-protein kinase that plays an essential role as cell surface receptor for neuregulins. Binds to neuregulin-1 (NRG1) and is activated by it; ligand-binding increases phosphorylation on tyrosine residues and promotes its association with the p85 subunit of phosphatidylinositol 3-kinase. May also be activated by CSPG5. Involved in the regulation of myeloid cell differentiation.</text>
</comment>
<comment type="catalytic activity">
    <reaction evidence="5">
        <text>L-tyrosyl-[protein] + ATP = O-phospho-L-tyrosyl-[protein] + ADP + H(+)</text>
        <dbReference type="Rhea" id="RHEA:10596"/>
        <dbReference type="Rhea" id="RHEA-COMP:10136"/>
        <dbReference type="Rhea" id="RHEA-COMP:20101"/>
        <dbReference type="ChEBI" id="CHEBI:15378"/>
        <dbReference type="ChEBI" id="CHEBI:30616"/>
        <dbReference type="ChEBI" id="CHEBI:46858"/>
        <dbReference type="ChEBI" id="CHEBI:61978"/>
        <dbReference type="ChEBI" id="CHEBI:456216"/>
        <dbReference type="EC" id="2.7.10.1"/>
    </reaction>
</comment>
<comment type="subunit">
    <text evidence="1 2 7">Monomer and homodimer. Heterodimer with each of the other ERBB receptors (Potential). Interacts with CSPG5, PA2G4, GRB7, MYOC and MUC1. Found in a ternary complex with NRG1 and ITGAV:ITGB3 or ITGA6:ITGB4 (By similarity).</text>
</comment>
<comment type="subcellular location">
    <subcellularLocation>
        <location>Membrane</location>
        <topology>Single-pass type I membrane protein</topology>
    </subcellularLocation>
</comment>
<comment type="domain">
    <text>The cytoplasmic part of the receptor may interact with the SH2 or SH3 domains of many signal-transducing proteins.</text>
</comment>
<comment type="PTM">
    <text evidence="1">Autophosphorylated. Ligand-binding increases phosphorylation on tyrosine residues and promotes its association with the p85 subunit of phosphatidylinositol 3-kinase.</text>
</comment>
<comment type="similarity">
    <text evidence="4">Belongs to the protein kinase superfamily. Tyr protein kinase family. EGF receptor subfamily.</text>
</comment>
<dbReference type="EC" id="2.7.10.1"/>
<dbReference type="EMBL" id="U29339">
    <property type="protein sequence ID" value="AAC28498.2"/>
    <property type="molecule type" value="mRNA"/>
</dbReference>
<dbReference type="EMBL" id="U52530">
    <property type="protein sequence ID" value="AAC53050.1"/>
    <property type="molecule type" value="mRNA"/>
</dbReference>
<dbReference type="PIR" id="JC4387">
    <property type="entry name" value="JC4387"/>
</dbReference>
<dbReference type="RefSeq" id="NP_058914.2">
    <property type="nucleotide sequence ID" value="NM_017218.3"/>
</dbReference>
<dbReference type="SMR" id="Q62799"/>
<dbReference type="BioGRID" id="248136">
    <property type="interactions" value="7"/>
</dbReference>
<dbReference type="DIP" id="DIP-41029N"/>
<dbReference type="ELM" id="Q62799"/>
<dbReference type="FunCoup" id="Q62799">
    <property type="interactions" value="1177"/>
</dbReference>
<dbReference type="IntAct" id="Q62799">
    <property type="interactions" value="1"/>
</dbReference>
<dbReference type="STRING" id="10116.ENSRNOP00000006796"/>
<dbReference type="GlyCosmos" id="Q62799">
    <property type="glycosylation" value="10 sites, No reported glycans"/>
</dbReference>
<dbReference type="GlyGen" id="Q62799">
    <property type="glycosylation" value="11 sites"/>
</dbReference>
<dbReference type="iPTMnet" id="Q62799"/>
<dbReference type="PhosphoSitePlus" id="Q62799"/>
<dbReference type="PaxDb" id="10116-ENSRNOP00000006796"/>
<dbReference type="ABCD" id="Q62799">
    <property type="antibodies" value="1 sequenced antibody"/>
</dbReference>
<dbReference type="DNASU" id="29496"/>
<dbReference type="GeneID" id="29496"/>
<dbReference type="KEGG" id="rno:29496"/>
<dbReference type="UCSC" id="RGD:69323">
    <property type="organism name" value="rat"/>
</dbReference>
<dbReference type="AGR" id="RGD:69323"/>
<dbReference type="CTD" id="2065"/>
<dbReference type="RGD" id="69323">
    <property type="gene designation" value="Erbb3"/>
</dbReference>
<dbReference type="eggNOG" id="KOG1025">
    <property type="taxonomic scope" value="Eukaryota"/>
</dbReference>
<dbReference type="InParanoid" id="Q62799"/>
<dbReference type="OrthoDB" id="6219513at2759"/>
<dbReference type="PhylomeDB" id="Q62799"/>
<dbReference type="BRENDA" id="2.7.10.1">
    <property type="organism ID" value="5301"/>
</dbReference>
<dbReference type="Reactome" id="R-RNO-1227986">
    <property type="pathway name" value="Signaling by ERBB2"/>
</dbReference>
<dbReference type="Reactome" id="R-RNO-1236394">
    <property type="pathway name" value="Signaling by ERBB4"/>
</dbReference>
<dbReference type="Reactome" id="R-RNO-1250196">
    <property type="pathway name" value="SHC1 events in ERBB2 signaling"/>
</dbReference>
<dbReference type="Reactome" id="R-RNO-1257604">
    <property type="pathway name" value="PIP3 activates AKT signaling"/>
</dbReference>
<dbReference type="Reactome" id="R-RNO-1306955">
    <property type="pathway name" value="GRB7 events in ERBB2 signaling"/>
</dbReference>
<dbReference type="Reactome" id="R-RNO-1358803">
    <property type="pathway name" value="Downregulation of ERBB2:ERBB3 signaling"/>
</dbReference>
<dbReference type="Reactome" id="R-RNO-1963642">
    <property type="pathway name" value="PI3K events in ERBB2 signaling"/>
</dbReference>
<dbReference type="Reactome" id="R-RNO-5673001">
    <property type="pathway name" value="RAF/MAP kinase cascade"/>
</dbReference>
<dbReference type="Reactome" id="R-RNO-6785631">
    <property type="pathway name" value="ERBB2 Regulates Cell Motility"/>
</dbReference>
<dbReference type="Reactome" id="R-RNO-6811558">
    <property type="pathway name" value="PI5P, PP2A and IER3 Regulate PI3K/AKT Signaling"/>
</dbReference>
<dbReference type="Reactome" id="R-RNO-8847993">
    <property type="pathway name" value="ERBB2 Activates PTK6 Signaling"/>
</dbReference>
<dbReference type="Reactome" id="R-RNO-8863795">
    <property type="pathway name" value="Downregulation of ERBB2 signaling"/>
</dbReference>
<dbReference type="PRO" id="PR:Q62799"/>
<dbReference type="Proteomes" id="UP000002494">
    <property type="component" value="Unplaced"/>
</dbReference>
<dbReference type="GO" id="GO:0016324">
    <property type="term" value="C:apical plasma membrane"/>
    <property type="evidence" value="ECO:0000266"/>
    <property type="project" value="RGD"/>
</dbReference>
<dbReference type="GO" id="GO:0009925">
    <property type="term" value="C:basal plasma membrane"/>
    <property type="evidence" value="ECO:0000318"/>
    <property type="project" value="GO_Central"/>
</dbReference>
<dbReference type="GO" id="GO:0016323">
    <property type="term" value="C:basolateral plasma membrane"/>
    <property type="evidence" value="ECO:0000266"/>
    <property type="project" value="RGD"/>
</dbReference>
<dbReference type="GO" id="GO:0038143">
    <property type="term" value="C:ERBB3:ERBB2 complex"/>
    <property type="evidence" value="ECO:0000266"/>
    <property type="project" value="RGD"/>
</dbReference>
<dbReference type="GO" id="GO:0005615">
    <property type="term" value="C:extracellular space"/>
    <property type="evidence" value="ECO:0000266"/>
    <property type="project" value="RGD"/>
</dbReference>
<dbReference type="GO" id="GO:0016328">
    <property type="term" value="C:lateral plasma membrane"/>
    <property type="evidence" value="ECO:0000266"/>
    <property type="project" value="RGD"/>
</dbReference>
<dbReference type="GO" id="GO:0043025">
    <property type="term" value="C:neuronal cell body"/>
    <property type="evidence" value="ECO:0000314"/>
    <property type="project" value="RGD"/>
</dbReference>
<dbReference type="GO" id="GO:0005886">
    <property type="term" value="C:plasma membrane"/>
    <property type="evidence" value="ECO:0000266"/>
    <property type="project" value="RGD"/>
</dbReference>
<dbReference type="GO" id="GO:0045211">
    <property type="term" value="C:postsynaptic membrane"/>
    <property type="evidence" value="ECO:0000314"/>
    <property type="project" value="RGD"/>
</dbReference>
<dbReference type="GO" id="GO:0043235">
    <property type="term" value="C:receptor complex"/>
    <property type="evidence" value="ECO:0000266"/>
    <property type="project" value="RGD"/>
</dbReference>
<dbReference type="GO" id="GO:0005524">
    <property type="term" value="F:ATP binding"/>
    <property type="evidence" value="ECO:0007669"/>
    <property type="project" value="UniProtKB-KW"/>
</dbReference>
<dbReference type="GO" id="GO:0043125">
    <property type="term" value="F:ErbB-3 class receptor binding"/>
    <property type="evidence" value="ECO:0000266"/>
    <property type="project" value="RGD"/>
</dbReference>
<dbReference type="GO" id="GO:0019838">
    <property type="term" value="F:growth factor binding"/>
    <property type="evidence" value="ECO:0000266"/>
    <property type="project" value="RGD"/>
</dbReference>
<dbReference type="GO" id="GO:0042802">
    <property type="term" value="F:identical protein binding"/>
    <property type="evidence" value="ECO:0000266"/>
    <property type="project" value="RGD"/>
</dbReference>
<dbReference type="GO" id="GO:0038132">
    <property type="term" value="F:neuregulin binding"/>
    <property type="evidence" value="ECO:0000315"/>
    <property type="project" value="RGD"/>
</dbReference>
<dbReference type="GO" id="GO:0038131">
    <property type="term" value="F:neuregulin receptor activity"/>
    <property type="evidence" value="ECO:0000315"/>
    <property type="project" value="RGD"/>
</dbReference>
<dbReference type="GO" id="GO:0046982">
    <property type="term" value="F:protein heterodimerization activity"/>
    <property type="evidence" value="ECO:0000266"/>
    <property type="project" value="RGD"/>
</dbReference>
<dbReference type="GO" id="GO:0030296">
    <property type="term" value="F:protein tyrosine kinase activator activity"/>
    <property type="evidence" value="ECO:0000266"/>
    <property type="project" value="RGD"/>
</dbReference>
<dbReference type="GO" id="GO:0038023">
    <property type="term" value="F:signaling receptor activity"/>
    <property type="evidence" value="ECO:0000266"/>
    <property type="project" value="RGD"/>
</dbReference>
<dbReference type="GO" id="GO:0004714">
    <property type="term" value="F:transmembrane receptor protein tyrosine kinase activity"/>
    <property type="evidence" value="ECO:0000304"/>
    <property type="project" value="RGD"/>
</dbReference>
<dbReference type="GO" id="GO:0004888">
    <property type="term" value="F:transmembrane signaling receptor activity"/>
    <property type="evidence" value="ECO:0000266"/>
    <property type="project" value="RGD"/>
</dbReference>
<dbReference type="GO" id="GO:0031625">
    <property type="term" value="F:ubiquitin protein ligase binding"/>
    <property type="evidence" value="ECO:0000266"/>
    <property type="project" value="RGD"/>
</dbReference>
<dbReference type="GO" id="GO:0007409">
    <property type="term" value="P:axonogenesis"/>
    <property type="evidence" value="ECO:0000270"/>
    <property type="project" value="RGD"/>
</dbReference>
<dbReference type="GO" id="GO:0007169">
    <property type="term" value="P:cell surface receptor protein tyrosine kinase signaling pathway"/>
    <property type="evidence" value="ECO:0000266"/>
    <property type="project" value="RGD"/>
</dbReference>
<dbReference type="GO" id="GO:0032869">
    <property type="term" value="P:cellular response to insulin stimulus"/>
    <property type="evidence" value="ECO:0000270"/>
    <property type="project" value="RGD"/>
</dbReference>
<dbReference type="GO" id="GO:0071260">
    <property type="term" value="P:cellular response to mechanical stimulus"/>
    <property type="evidence" value="ECO:0000270"/>
    <property type="project" value="RGD"/>
</dbReference>
<dbReference type="GO" id="GO:0007623">
    <property type="term" value="P:circadian rhythm"/>
    <property type="evidence" value="ECO:0000270"/>
    <property type="project" value="RGD"/>
</dbReference>
<dbReference type="GO" id="GO:0021545">
    <property type="term" value="P:cranial nerve development"/>
    <property type="evidence" value="ECO:0000266"/>
    <property type="project" value="RGD"/>
</dbReference>
<dbReference type="GO" id="GO:0003197">
    <property type="term" value="P:endocardial cushion development"/>
    <property type="evidence" value="ECO:0000266"/>
    <property type="project" value="RGD"/>
</dbReference>
<dbReference type="GO" id="GO:0007173">
    <property type="term" value="P:epidermal growth factor receptor signaling pathway"/>
    <property type="evidence" value="ECO:0000315"/>
    <property type="project" value="RGD"/>
</dbReference>
<dbReference type="GO" id="GO:0038133">
    <property type="term" value="P:ERBB2-ERBB3 signaling pathway"/>
    <property type="evidence" value="ECO:0000266"/>
    <property type="project" value="RGD"/>
</dbReference>
<dbReference type="GO" id="GO:0097192">
    <property type="term" value="P:extrinsic apoptotic signaling pathway in absence of ligand"/>
    <property type="evidence" value="ECO:0000266"/>
    <property type="project" value="RGD"/>
</dbReference>
<dbReference type="GO" id="GO:0060056">
    <property type="term" value="P:mammary gland involution"/>
    <property type="evidence" value="ECO:0000270"/>
    <property type="project" value="RGD"/>
</dbReference>
<dbReference type="GO" id="GO:0097049">
    <property type="term" value="P:motor neuron apoptotic process"/>
    <property type="evidence" value="ECO:0000266"/>
    <property type="project" value="RGD"/>
</dbReference>
<dbReference type="GO" id="GO:0042552">
    <property type="term" value="P:myelination"/>
    <property type="evidence" value="ECO:0000266"/>
    <property type="project" value="RGD"/>
</dbReference>
<dbReference type="GO" id="GO:0043066">
    <property type="term" value="P:negative regulation of apoptotic process"/>
    <property type="evidence" value="ECO:0000318"/>
    <property type="project" value="GO_Central"/>
</dbReference>
<dbReference type="GO" id="GO:0007162">
    <property type="term" value="P:negative regulation of cell adhesion"/>
    <property type="evidence" value="ECO:0000266"/>
    <property type="project" value="RGD"/>
</dbReference>
<dbReference type="GO" id="GO:2000672">
    <property type="term" value="P:negative regulation of motor neuron apoptotic process"/>
    <property type="evidence" value="ECO:0000266"/>
    <property type="project" value="RGD"/>
</dbReference>
<dbReference type="GO" id="GO:0043524">
    <property type="term" value="P:negative regulation of neuron apoptotic process"/>
    <property type="evidence" value="ECO:0000266"/>
    <property type="project" value="RGD"/>
</dbReference>
<dbReference type="GO" id="GO:0051048">
    <property type="term" value="P:negative regulation of secretion"/>
    <property type="evidence" value="ECO:0000266"/>
    <property type="project" value="RGD"/>
</dbReference>
<dbReference type="GO" id="GO:0009968">
    <property type="term" value="P:negative regulation of signal transduction"/>
    <property type="evidence" value="ECO:0000266"/>
    <property type="project" value="RGD"/>
</dbReference>
<dbReference type="GO" id="GO:0051402">
    <property type="term" value="P:neuron apoptotic process"/>
    <property type="evidence" value="ECO:0000266"/>
    <property type="project" value="RGD"/>
</dbReference>
<dbReference type="GO" id="GO:0030182">
    <property type="term" value="P:neuron differentiation"/>
    <property type="evidence" value="ECO:0000318"/>
    <property type="project" value="GO_Central"/>
</dbReference>
<dbReference type="GO" id="GO:0007422">
    <property type="term" value="P:peripheral nervous system development"/>
    <property type="evidence" value="ECO:0000266"/>
    <property type="project" value="RGD"/>
</dbReference>
<dbReference type="GO" id="GO:0043491">
    <property type="term" value="P:phosphatidylinositol 3-kinase/protein kinase B signal transduction"/>
    <property type="evidence" value="ECO:0000266"/>
    <property type="project" value="RGD"/>
</dbReference>
<dbReference type="GO" id="GO:0070886">
    <property type="term" value="P:positive regulation of calcineurin-NFAT signaling cascade"/>
    <property type="evidence" value="ECO:0000266"/>
    <property type="project" value="RGD"/>
</dbReference>
<dbReference type="GO" id="GO:0055025">
    <property type="term" value="P:positive regulation of cardiac muscle tissue development"/>
    <property type="evidence" value="ECO:0000266"/>
    <property type="project" value="RGD"/>
</dbReference>
<dbReference type="GO" id="GO:0046326">
    <property type="term" value="P:positive regulation of D-glucose import"/>
    <property type="evidence" value="ECO:0000315"/>
    <property type="project" value="RGD"/>
</dbReference>
<dbReference type="GO" id="GO:0050679">
    <property type="term" value="P:positive regulation of epithelial cell proliferation"/>
    <property type="evidence" value="ECO:0000318"/>
    <property type="project" value="GO_Central"/>
</dbReference>
<dbReference type="GO" id="GO:0010628">
    <property type="term" value="P:positive regulation of gene expression"/>
    <property type="evidence" value="ECO:0000266"/>
    <property type="project" value="RGD"/>
</dbReference>
<dbReference type="GO" id="GO:0043410">
    <property type="term" value="P:positive regulation of MAPK cascade"/>
    <property type="evidence" value="ECO:0000318"/>
    <property type="project" value="GO_Central"/>
</dbReference>
<dbReference type="GO" id="GO:1905710">
    <property type="term" value="P:positive regulation of membrane permeability"/>
    <property type="evidence" value="ECO:0000315"/>
    <property type="project" value="RGD"/>
</dbReference>
<dbReference type="GO" id="GO:0042127">
    <property type="term" value="P:regulation of cell population proliferation"/>
    <property type="evidence" value="ECO:0000266"/>
    <property type="project" value="RGD"/>
</dbReference>
<dbReference type="GO" id="GO:0009410">
    <property type="term" value="P:response to xenobiotic stimulus"/>
    <property type="evidence" value="ECO:0000270"/>
    <property type="project" value="RGD"/>
</dbReference>
<dbReference type="GO" id="GO:0014044">
    <property type="term" value="P:Schwann cell development"/>
    <property type="evidence" value="ECO:0000266"/>
    <property type="project" value="RGD"/>
</dbReference>
<dbReference type="GO" id="GO:0014037">
    <property type="term" value="P:Schwann cell differentiation"/>
    <property type="evidence" value="ECO:0000266"/>
    <property type="project" value="RGD"/>
</dbReference>
<dbReference type="GO" id="GO:0007165">
    <property type="term" value="P:signal transduction"/>
    <property type="evidence" value="ECO:0000266"/>
    <property type="project" value="RGD"/>
</dbReference>
<dbReference type="GO" id="GO:0007519">
    <property type="term" value="P:skeletal muscle tissue development"/>
    <property type="evidence" value="ECO:0000270"/>
    <property type="project" value="RGD"/>
</dbReference>
<dbReference type="GO" id="GO:0043586">
    <property type="term" value="P:tongue development"/>
    <property type="evidence" value="ECO:0000270"/>
    <property type="project" value="RGD"/>
</dbReference>
<dbReference type="CDD" id="cd00064">
    <property type="entry name" value="FU"/>
    <property type="match status" value="3"/>
</dbReference>
<dbReference type="CDD" id="cd12095">
    <property type="entry name" value="TM_ErbB3"/>
    <property type="match status" value="1"/>
</dbReference>
<dbReference type="FunFam" id="2.10.220.10:FF:000001">
    <property type="entry name" value="Receptor protein-tyrosine kinase"/>
    <property type="match status" value="1"/>
</dbReference>
<dbReference type="FunFam" id="3.80.20.20:FF:000003">
    <property type="entry name" value="Receptor protein-tyrosine kinase"/>
    <property type="match status" value="1"/>
</dbReference>
<dbReference type="FunFam" id="3.80.20.20:FF:000004">
    <property type="entry name" value="Receptor protein-tyrosine kinase"/>
    <property type="match status" value="1"/>
</dbReference>
<dbReference type="FunFam" id="2.10.220.10:FF:000016">
    <property type="entry name" value="Receptor tyrosine-protein kinase erbB-3"/>
    <property type="match status" value="1"/>
</dbReference>
<dbReference type="FunFam" id="3.30.200.20:FF:000276">
    <property type="entry name" value="Receptor tyrosine-protein kinase erbB-3"/>
    <property type="match status" value="1"/>
</dbReference>
<dbReference type="FunFam" id="1.10.510.10:FF:000233">
    <property type="entry name" value="receptor tyrosine-protein kinase erbB-3"/>
    <property type="match status" value="1"/>
</dbReference>
<dbReference type="Gene3D" id="1.20.890.10">
    <property type="entry name" value="cAMP-dependent protein kinase regulatory subunit, dimerization-anchoring domain"/>
    <property type="match status" value="1"/>
</dbReference>
<dbReference type="Gene3D" id="2.10.220.10">
    <property type="entry name" value="Hormone Receptor, Insulin-like Growth Factor Receptor 1, Chain A, domain 2"/>
    <property type="match status" value="2"/>
</dbReference>
<dbReference type="Gene3D" id="3.30.200.20">
    <property type="entry name" value="Phosphorylase Kinase, domain 1"/>
    <property type="match status" value="1"/>
</dbReference>
<dbReference type="Gene3D" id="3.80.20.20">
    <property type="entry name" value="Receptor L-domain"/>
    <property type="match status" value="2"/>
</dbReference>
<dbReference type="Gene3D" id="1.10.510.10">
    <property type="entry name" value="Transferase(Phosphotransferase) domain 1"/>
    <property type="match status" value="1"/>
</dbReference>
<dbReference type="InterPro" id="IPR006211">
    <property type="entry name" value="Furin-like_Cys-rich_dom"/>
</dbReference>
<dbReference type="InterPro" id="IPR006212">
    <property type="entry name" value="Furin_repeat"/>
</dbReference>
<dbReference type="InterPro" id="IPR032778">
    <property type="entry name" value="GF_recep_IV"/>
</dbReference>
<dbReference type="InterPro" id="IPR009030">
    <property type="entry name" value="Growth_fac_rcpt_cys_sf"/>
</dbReference>
<dbReference type="InterPro" id="IPR011009">
    <property type="entry name" value="Kinase-like_dom_sf"/>
</dbReference>
<dbReference type="InterPro" id="IPR000719">
    <property type="entry name" value="Prot_kinase_dom"/>
</dbReference>
<dbReference type="InterPro" id="IPR000494">
    <property type="entry name" value="Rcpt_L-dom"/>
</dbReference>
<dbReference type="InterPro" id="IPR036941">
    <property type="entry name" value="Rcpt_L-dom_sf"/>
</dbReference>
<dbReference type="InterPro" id="IPR050122">
    <property type="entry name" value="RTK"/>
</dbReference>
<dbReference type="InterPro" id="IPR001245">
    <property type="entry name" value="Ser-Thr/Tyr_kinase_cat_dom"/>
</dbReference>
<dbReference type="InterPro" id="IPR008266">
    <property type="entry name" value="Tyr_kinase_AS"/>
</dbReference>
<dbReference type="InterPro" id="IPR020635">
    <property type="entry name" value="Tyr_kinase_cat_dom"/>
</dbReference>
<dbReference type="InterPro" id="IPR016245">
    <property type="entry name" value="Tyr_kinase_EGF/ERB/XmrK_rcpt"/>
</dbReference>
<dbReference type="PANTHER" id="PTHR24416:SF88">
    <property type="entry name" value="RECEPTOR TYROSINE-PROTEIN KINASE ERBB-3"/>
    <property type="match status" value="1"/>
</dbReference>
<dbReference type="PANTHER" id="PTHR24416">
    <property type="entry name" value="TYROSINE-PROTEIN KINASE RECEPTOR"/>
    <property type="match status" value="1"/>
</dbReference>
<dbReference type="Pfam" id="PF00757">
    <property type="entry name" value="Furin-like"/>
    <property type="match status" value="1"/>
</dbReference>
<dbReference type="Pfam" id="PF14843">
    <property type="entry name" value="GF_recep_IV"/>
    <property type="match status" value="1"/>
</dbReference>
<dbReference type="Pfam" id="PF07714">
    <property type="entry name" value="PK_Tyr_Ser-Thr"/>
    <property type="match status" value="1"/>
</dbReference>
<dbReference type="Pfam" id="PF01030">
    <property type="entry name" value="Recep_L_domain"/>
    <property type="match status" value="2"/>
</dbReference>
<dbReference type="PIRSF" id="PIRSF000619">
    <property type="entry name" value="TyrPK_EGF-R"/>
    <property type="match status" value="1"/>
</dbReference>
<dbReference type="PRINTS" id="PR00109">
    <property type="entry name" value="TYRKINASE"/>
</dbReference>
<dbReference type="SMART" id="SM00261">
    <property type="entry name" value="FU"/>
    <property type="match status" value="5"/>
</dbReference>
<dbReference type="SMART" id="SM00219">
    <property type="entry name" value="TyrKc"/>
    <property type="match status" value="1"/>
</dbReference>
<dbReference type="SUPFAM" id="SSF57184">
    <property type="entry name" value="Growth factor receptor domain"/>
    <property type="match status" value="2"/>
</dbReference>
<dbReference type="SUPFAM" id="SSF52058">
    <property type="entry name" value="L domain-like"/>
    <property type="match status" value="2"/>
</dbReference>
<dbReference type="SUPFAM" id="SSF56112">
    <property type="entry name" value="Protein kinase-like (PK-like)"/>
    <property type="match status" value="1"/>
</dbReference>
<dbReference type="PROSITE" id="PS50011">
    <property type="entry name" value="PROTEIN_KINASE_DOM"/>
    <property type="match status" value="1"/>
</dbReference>
<dbReference type="PROSITE" id="PS00109">
    <property type="entry name" value="PROTEIN_KINASE_TYR"/>
    <property type="match status" value="1"/>
</dbReference>
<organism>
    <name type="scientific">Rattus norvegicus</name>
    <name type="common">Rat</name>
    <dbReference type="NCBI Taxonomy" id="10116"/>
    <lineage>
        <taxon>Eukaryota</taxon>
        <taxon>Metazoa</taxon>
        <taxon>Chordata</taxon>
        <taxon>Craniata</taxon>
        <taxon>Vertebrata</taxon>
        <taxon>Euteleostomi</taxon>
        <taxon>Mammalia</taxon>
        <taxon>Eutheria</taxon>
        <taxon>Euarchontoglires</taxon>
        <taxon>Glires</taxon>
        <taxon>Rodentia</taxon>
        <taxon>Myomorpha</taxon>
        <taxon>Muroidea</taxon>
        <taxon>Muridae</taxon>
        <taxon>Murinae</taxon>
        <taxon>Rattus</taxon>
    </lineage>
</organism>
<name>ERBB3_RAT</name>
<evidence type="ECO:0000250" key="1">
    <source>
        <dbReference type="UniProtKB" id="P21860"/>
    </source>
</evidence>
<evidence type="ECO:0000250" key="2">
    <source>
        <dbReference type="UniProtKB" id="Q61526"/>
    </source>
</evidence>
<evidence type="ECO:0000255" key="3"/>
<evidence type="ECO:0000255" key="4">
    <source>
        <dbReference type="PROSITE-ProRule" id="PRU00159"/>
    </source>
</evidence>
<evidence type="ECO:0000255" key="5">
    <source>
        <dbReference type="PROSITE-ProRule" id="PRU10028"/>
    </source>
</evidence>
<evidence type="ECO:0000256" key="6">
    <source>
        <dbReference type="SAM" id="MobiDB-lite"/>
    </source>
</evidence>
<evidence type="ECO:0000305" key="7"/>
<evidence type="ECO:0007744" key="8">
    <source>
    </source>
</evidence>
<accession>Q62799</accession>
<accession>Q62955</accession>
<protein>
    <recommendedName>
        <fullName>Receptor tyrosine-protein kinase erbB-3</fullName>
        <ecNumber>2.7.10.1</ecNumber>
    </recommendedName>
    <alternativeName>
        <fullName>Proto-oncogene-like protein c-ErbB-3</fullName>
    </alternativeName>
</protein>
<proteinExistence type="evidence at protein level"/>